<name>SYYM_SCHPO</name>
<accession>O74890</accession>
<organism>
    <name type="scientific">Schizosaccharomyces pombe (strain 972 / ATCC 24843)</name>
    <name type="common">Fission yeast</name>
    <dbReference type="NCBI Taxonomy" id="284812"/>
    <lineage>
        <taxon>Eukaryota</taxon>
        <taxon>Fungi</taxon>
        <taxon>Dikarya</taxon>
        <taxon>Ascomycota</taxon>
        <taxon>Taphrinomycotina</taxon>
        <taxon>Schizosaccharomycetes</taxon>
        <taxon>Schizosaccharomycetales</taxon>
        <taxon>Schizosaccharomycetaceae</taxon>
        <taxon>Schizosaccharomyces</taxon>
    </lineage>
</organism>
<protein>
    <recommendedName>
        <fullName>Tyrosine--tRNA ligase, mitochondrial</fullName>
        <ecNumber evidence="3">6.1.1.1</ecNumber>
    </recommendedName>
    <alternativeName>
        <fullName>Tyrosyl-tRNA synthetase</fullName>
        <shortName>TyrRS</shortName>
    </alternativeName>
</protein>
<sequence>MSRLLACLKQLQARSLIHNTTLLQPSCNVNSVYLGADPTAASLHVGNLVALMPLVHFFLNGFPVFTVIGDATAQLGDPSGRSTSRKQMAETTRTANSNSIHNQLKDLSSSILSYAQDCNYPFSQMPSSSQWSIVRNSSWYENLKLLKFLSSVGPHVRVSQMLARDSVTTRLQSPSGLSFAELTYQLLQAYDYSYLYENHSVNLQIGGSDQWGNITAGTDLVRRTHPNANVYALTTPLLTSSSGQKLGKSAGNAIWLDPKLTDSYSLYQYFISAPDDLACKCLDMLTLLPLEQLEQIKAEHEKDPSQRIVHKYLASNVVRMVHGKKALELAQIQTKLLHGAHQAPFGFYSEAPQQGDSFPSLPEIRALFKDCKFYRTIDSSIKDQPFSRLLRTLQIYTSRKEATEHILSGAVSLGHKPILDSNYKFPDNSLFVLRAGKRTFVLDSL</sequence>
<comment type="function">
    <text evidence="3">Catalyzes the attachment of tyrosine to tRNA(Tyr) in a two-step reaction: tyrosine is first activated by ATP to form Tyr-AMP and then transferred to the acceptor end of tRNA(Tyr).</text>
</comment>
<comment type="catalytic activity">
    <reaction evidence="3">
        <text>tRNA(Tyr) + L-tyrosine + ATP = L-tyrosyl-tRNA(Tyr) + AMP + diphosphate + H(+)</text>
        <dbReference type="Rhea" id="RHEA:10220"/>
        <dbReference type="Rhea" id="RHEA-COMP:9706"/>
        <dbReference type="Rhea" id="RHEA-COMP:9707"/>
        <dbReference type="ChEBI" id="CHEBI:15378"/>
        <dbReference type="ChEBI" id="CHEBI:30616"/>
        <dbReference type="ChEBI" id="CHEBI:33019"/>
        <dbReference type="ChEBI" id="CHEBI:58315"/>
        <dbReference type="ChEBI" id="CHEBI:78442"/>
        <dbReference type="ChEBI" id="CHEBI:78536"/>
        <dbReference type="ChEBI" id="CHEBI:456215"/>
        <dbReference type="EC" id="6.1.1.1"/>
    </reaction>
</comment>
<comment type="subunit">
    <text evidence="3">Homodimer.</text>
</comment>
<comment type="subcellular location">
    <subcellularLocation>
        <location evidence="6">Mitochondrion matrix</location>
    </subcellularLocation>
</comment>
<comment type="similarity">
    <text evidence="4">Belongs to the class-I aminoacyl-tRNA synthetase family.</text>
</comment>
<gene>
    <name evidence="1" type="primary">msy1</name>
    <name type="ORF">SPCC576.06c</name>
</gene>
<evidence type="ECO:0000250" key="1">
    <source>
        <dbReference type="UniProtKB" id="P48527"/>
    </source>
</evidence>
<evidence type="ECO:0000250" key="2">
    <source>
        <dbReference type="UniProtKB" id="P83453"/>
    </source>
</evidence>
<evidence type="ECO:0000250" key="3">
    <source>
        <dbReference type="UniProtKB" id="Q9Y2Z4"/>
    </source>
</evidence>
<evidence type="ECO:0000255" key="4"/>
<evidence type="ECO:0000255" key="5">
    <source>
        <dbReference type="PROSITE-ProRule" id="PRU00182"/>
    </source>
</evidence>
<evidence type="ECO:0000269" key="6">
    <source>
    </source>
</evidence>
<evidence type="ECO:0000305" key="7"/>
<evidence type="ECO:0000312" key="8">
    <source>
        <dbReference type="EMBL" id="CAA21185.1"/>
    </source>
</evidence>
<reference evidence="8" key="1">
    <citation type="journal article" date="2002" name="Nature">
        <title>The genome sequence of Schizosaccharomyces pombe.</title>
        <authorList>
            <person name="Wood V."/>
            <person name="Gwilliam R."/>
            <person name="Rajandream M.A."/>
            <person name="Lyne M.H."/>
            <person name="Lyne R."/>
            <person name="Stewart A."/>
            <person name="Sgouros J.G."/>
            <person name="Peat N."/>
            <person name="Hayles J."/>
            <person name="Baker S.G."/>
            <person name="Basham D."/>
            <person name="Bowman S."/>
            <person name="Brooks K."/>
            <person name="Brown D."/>
            <person name="Brown S."/>
            <person name="Chillingworth T."/>
            <person name="Churcher C.M."/>
            <person name="Collins M."/>
            <person name="Connor R."/>
            <person name="Cronin A."/>
            <person name="Davis P."/>
            <person name="Feltwell T."/>
            <person name="Fraser A."/>
            <person name="Gentles S."/>
            <person name="Goble A."/>
            <person name="Hamlin N."/>
            <person name="Harris D.E."/>
            <person name="Hidalgo J."/>
            <person name="Hodgson G."/>
            <person name="Holroyd S."/>
            <person name="Hornsby T."/>
            <person name="Howarth S."/>
            <person name="Huckle E.J."/>
            <person name="Hunt S."/>
            <person name="Jagels K."/>
            <person name="James K.D."/>
            <person name="Jones L."/>
            <person name="Jones M."/>
            <person name="Leather S."/>
            <person name="McDonald S."/>
            <person name="McLean J."/>
            <person name="Mooney P."/>
            <person name="Moule S."/>
            <person name="Mungall K.L."/>
            <person name="Murphy L.D."/>
            <person name="Niblett D."/>
            <person name="Odell C."/>
            <person name="Oliver K."/>
            <person name="O'Neil S."/>
            <person name="Pearson D."/>
            <person name="Quail M.A."/>
            <person name="Rabbinowitsch E."/>
            <person name="Rutherford K.M."/>
            <person name="Rutter S."/>
            <person name="Saunders D."/>
            <person name="Seeger K."/>
            <person name="Sharp S."/>
            <person name="Skelton J."/>
            <person name="Simmonds M.N."/>
            <person name="Squares R."/>
            <person name="Squares S."/>
            <person name="Stevens K."/>
            <person name="Taylor K."/>
            <person name="Taylor R.G."/>
            <person name="Tivey A."/>
            <person name="Walsh S.V."/>
            <person name="Warren T."/>
            <person name="Whitehead S."/>
            <person name="Woodward J.R."/>
            <person name="Volckaert G."/>
            <person name="Aert R."/>
            <person name="Robben J."/>
            <person name="Grymonprez B."/>
            <person name="Weltjens I."/>
            <person name="Vanstreels E."/>
            <person name="Rieger M."/>
            <person name="Schaefer M."/>
            <person name="Mueller-Auer S."/>
            <person name="Gabel C."/>
            <person name="Fuchs M."/>
            <person name="Duesterhoeft A."/>
            <person name="Fritzc C."/>
            <person name="Holzer E."/>
            <person name="Moestl D."/>
            <person name="Hilbert H."/>
            <person name="Borzym K."/>
            <person name="Langer I."/>
            <person name="Beck A."/>
            <person name="Lehrach H."/>
            <person name="Reinhardt R."/>
            <person name="Pohl T.M."/>
            <person name="Eger P."/>
            <person name="Zimmermann W."/>
            <person name="Wedler H."/>
            <person name="Wambutt R."/>
            <person name="Purnelle B."/>
            <person name="Goffeau A."/>
            <person name="Cadieu E."/>
            <person name="Dreano S."/>
            <person name="Gloux S."/>
            <person name="Lelaure V."/>
            <person name="Mottier S."/>
            <person name="Galibert F."/>
            <person name="Aves S.J."/>
            <person name="Xiang Z."/>
            <person name="Hunt C."/>
            <person name="Moore K."/>
            <person name="Hurst S.M."/>
            <person name="Lucas M."/>
            <person name="Rochet M."/>
            <person name="Gaillardin C."/>
            <person name="Tallada V.A."/>
            <person name="Garzon A."/>
            <person name="Thode G."/>
            <person name="Daga R.R."/>
            <person name="Cruzado L."/>
            <person name="Jimenez J."/>
            <person name="Sanchez M."/>
            <person name="del Rey F."/>
            <person name="Benito J."/>
            <person name="Dominguez A."/>
            <person name="Revuelta J.L."/>
            <person name="Moreno S."/>
            <person name="Armstrong J."/>
            <person name="Forsburg S.L."/>
            <person name="Cerutti L."/>
            <person name="Lowe T."/>
            <person name="McCombie W.R."/>
            <person name="Paulsen I."/>
            <person name="Potashkin J."/>
            <person name="Shpakovski G.V."/>
            <person name="Ussery D."/>
            <person name="Barrell B.G."/>
            <person name="Nurse P."/>
        </authorList>
    </citation>
    <scope>NUCLEOTIDE SEQUENCE [LARGE SCALE GENOMIC DNA]</scope>
    <source>
        <strain>972 / ATCC 24843</strain>
    </source>
</reference>
<reference evidence="7" key="2">
    <citation type="journal article" date="2006" name="Nat. Biotechnol.">
        <title>ORFeome cloning and global analysis of protein localization in the fission yeast Schizosaccharomyces pombe.</title>
        <authorList>
            <person name="Matsuyama A."/>
            <person name="Arai R."/>
            <person name="Yashiroda Y."/>
            <person name="Shirai A."/>
            <person name="Kamata A."/>
            <person name="Sekido S."/>
            <person name="Kobayashi Y."/>
            <person name="Hashimoto A."/>
            <person name="Hamamoto M."/>
            <person name="Hiraoka Y."/>
            <person name="Horinouchi S."/>
            <person name="Yoshida M."/>
        </authorList>
    </citation>
    <scope>SUBCELLULAR LOCATION [LARGE SCALE ANALYSIS]</scope>
</reference>
<feature type="transit peptide" description="Mitochondrion" evidence="1 4">
    <location>
        <begin position="1"/>
        <end status="unknown"/>
    </location>
</feature>
<feature type="chain" id="PRO_0000314632" description="Tyrosine--tRNA ligase, mitochondrial">
    <location>
        <begin status="unknown"/>
        <end position="445"/>
    </location>
</feature>
<feature type="domain" description="S4 RNA-binding" evidence="5">
    <location>
        <begin position="384"/>
        <end position="445"/>
    </location>
</feature>
<feature type="short sequence motif" description="'HIGH' region" evidence="4">
    <location>
        <begin position="38"/>
        <end position="47"/>
    </location>
</feature>
<feature type="short sequence motif" description="'KMSKS' region" evidence="4">
    <location>
        <begin position="245"/>
        <end position="249"/>
    </location>
</feature>
<feature type="binding site" evidence="3">
    <location>
        <position position="33"/>
    </location>
    <ligand>
        <name>L-tyrosine</name>
        <dbReference type="ChEBI" id="CHEBI:58315"/>
    </ligand>
</feature>
<feature type="binding site" evidence="3">
    <location>
        <position position="37"/>
    </location>
    <ligand>
        <name>ATP</name>
        <dbReference type="ChEBI" id="CHEBI:30616"/>
    </ligand>
</feature>
<feature type="binding site" evidence="3">
    <location>
        <position position="77"/>
    </location>
    <ligand>
        <name>L-tyrosine</name>
        <dbReference type="ChEBI" id="CHEBI:58315"/>
    </ligand>
</feature>
<feature type="binding site" evidence="3">
    <location>
        <position position="184"/>
    </location>
    <ligand>
        <name>L-tyrosine</name>
        <dbReference type="ChEBI" id="CHEBI:58315"/>
    </ligand>
</feature>
<feature type="binding site" evidence="3">
    <location>
        <position position="188"/>
    </location>
    <ligand>
        <name>L-tyrosine</name>
        <dbReference type="ChEBI" id="CHEBI:58315"/>
    </ligand>
</feature>
<feature type="binding site" evidence="3">
    <location>
        <position position="191"/>
    </location>
    <ligand>
        <name>L-tyrosine</name>
        <dbReference type="ChEBI" id="CHEBI:58315"/>
    </ligand>
</feature>
<feature type="binding site" evidence="3">
    <location>
        <position position="210"/>
    </location>
    <ligand>
        <name>L-tyrosine</name>
        <dbReference type="ChEBI" id="CHEBI:58315"/>
    </ligand>
</feature>
<feature type="binding site" evidence="2">
    <location>
        <position position="248"/>
    </location>
    <ligand>
        <name>ATP</name>
        <dbReference type="ChEBI" id="CHEBI:30616"/>
    </ligand>
</feature>
<keyword id="KW-0030">Aminoacyl-tRNA synthetase</keyword>
<keyword id="KW-0067">ATP-binding</keyword>
<keyword id="KW-0436">Ligase</keyword>
<keyword id="KW-0496">Mitochondrion</keyword>
<keyword id="KW-0547">Nucleotide-binding</keyword>
<keyword id="KW-0648">Protein biosynthesis</keyword>
<keyword id="KW-1185">Reference proteome</keyword>
<keyword id="KW-0694">RNA-binding</keyword>
<keyword id="KW-0809">Transit peptide</keyword>
<dbReference type="EC" id="6.1.1.1" evidence="3"/>
<dbReference type="EMBL" id="CU329672">
    <property type="protein sequence ID" value="CAA21185.1"/>
    <property type="molecule type" value="Genomic_DNA"/>
</dbReference>
<dbReference type="PIR" id="T41416">
    <property type="entry name" value="T41416"/>
</dbReference>
<dbReference type="RefSeq" id="NP_588433.1">
    <property type="nucleotide sequence ID" value="NM_001023424.2"/>
</dbReference>
<dbReference type="SMR" id="O74890"/>
<dbReference type="FunCoup" id="O74890">
    <property type="interactions" value="531"/>
</dbReference>
<dbReference type="STRING" id="284812.O74890"/>
<dbReference type="iPTMnet" id="O74890"/>
<dbReference type="PaxDb" id="4896-SPCC576.06c.1"/>
<dbReference type="EnsemblFungi" id="SPCC576.06c.1">
    <property type="protein sequence ID" value="SPCC576.06c.1:pep"/>
    <property type="gene ID" value="SPCC576.06c"/>
</dbReference>
<dbReference type="KEGG" id="spo:2539529"/>
<dbReference type="PomBase" id="SPCC576.06c"/>
<dbReference type="VEuPathDB" id="FungiDB:SPCC576.06c"/>
<dbReference type="eggNOG" id="KOG2623">
    <property type="taxonomic scope" value="Eukaryota"/>
</dbReference>
<dbReference type="HOGENOM" id="CLU_024003_0_0_1"/>
<dbReference type="InParanoid" id="O74890"/>
<dbReference type="OMA" id="YMMAKDS"/>
<dbReference type="PhylomeDB" id="O74890"/>
<dbReference type="PRO" id="PR:O74890"/>
<dbReference type="Proteomes" id="UP000002485">
    <property type="component" value="Chromosome III"/>
</dbReference>
<dbReference type="GO" id="GO:0005829">
    <property type="term" value="C:cytosol"/>
    <property type="evidence" value="ECO:0000318"/>
    <property type="project" value="GO_Central"/>
</dbReference>
<dbReference type="GO" id="GO:0005759">
    <property type="term" value="C:mitochondrial matrix"/>
    <property type="evidence" value="ECO:0000305"/>
    <property type="project" value="PomBase"/>
</dbReference>
<dbReference type="GO" id="GO:0005739">
    <property type="term" value="C:mitochondrion"/>
    <property type="evidence" value="ECO:0007005"/>
    <property type="project" value="PomBase"/>
</dbReference>
<dbReference type="GO" id="GO:0005524">
    <property type="term" value="F:ATP binding"/>
    <property type="evidence" value="ECO:0000255"/>
    <property type="project" value="PomBase"/>
</dbReference>
<dbReference type="GO" id="GO:0003723">
    <property type="term" value="F:RNA binding"/>
    <property type="evidence" value="ECO:0007669"/>
    <property type="project" value="UniProtKB-KW"/>
</dbReference>
<dbReference type="GO" id="GO:0004831">
    <property type="term" value="F:tyrosine-tRNA ligase activity"/>
    <property type="evidence" value="ECO:0000318"/>
    <property type="project" value="GO_Central"/>
</dbReference>
<dbReference type="GO" id="GO:0032543">
    <property type="term" value="P:mitochondrial translation"/>
    <property type="evidence" value="ECO:0000303"/>
    <property type="project" value="PomBase"/>
</dbReference>
<dbReference type="GO" id="GO:0043039">
    <property type="term" value="P:tRNA aminoacylation"/>
    <property type="evidence" value="ECO:0000318"/>
    <property type="project" value="GO_Central"/>
</dbReference>
<dbReference type="GO" id="GO:0006437">
    <property type="term" value="P:tyrosyl-tRNA aminoacylation"/>
    <property type="evidence" value="ECO:0000250"/>
    <property type="project" value="PomBase"/>
</dbReference>
<dbReference type="CDD" id="cd00805">
    <property type="entry name" value="TyrRS_core"/>
    <property type="match status" value="1"/>
</dbReference>
<dbReference type="FunFam" id="1.10.240.10:FF:000001">
    <property type="entry name" value="Tyrosine--tRNA ligase"/>
    <property type="match status" value="1"/>
</dbReference>
<dbReference type="FunFam" id="3.40.50.620:FF:000287">
    <property type="entry name" value="Tyrosine--tRNA ligase"/>
    <property type="match status" value="1"/>
</dbReference>
<dbReference type="Gene3D" id="3.40.50.620">
    <property type="entry name" value="HUPs"/>
    <property type="match status" value="1"/>
</dbReference>
<dbReference type="Gene3D" id="3.10.290.10">
    <property type="entry name" value="RNA-binding S4 domain"/>
    <property type="match status" value="1"/>
</dbReference>
<dbReference type="Gene3D" id="1.10.240.10">
    <property type="entry name" value="Tyrosyl-Transfer RNA Synthetase"/>
    <property type="match status" value="1"/>
</dbReference>
<dbReference type="InterPro" id="IPR001412">
    <property type="entry name" value="aa-tRNA-synth_I_CS"/>
</dbReference>
<dbReference type="InterPro" id="IPR002305">
    <property type="entry name" value="aa-tRNA-synth_Ic"/>
</dbReference>
<dbReference type="InterPro" id="IPR014729">
    <property type="entry name" value="Rossmann-like_a/b/a_fold"/>
</dbReference>
<dbReference type="InterPro" id="IPR036986">
    <property type="entry name" value="S4_RNA-bd_sf"/>
</dbReference>
<dbReference type="InterPro" id="IPR002307">
    <property type="entry name" value="Tyr-tRNA-ligase"/>
</dbReference>
<dbReference type="InterPro" id="IPR024088">
    <property type="entry name" value="Tyr-tRNA-ligase_bac-type"/>
</dbReference>
<dbReference type="NCBIfam" id="TIGR00234">
    <property type="entry name" value="tyrS"/>
    <property type="match status" value="1"/>
</dbReference>
<dbReference type="PANTHER" id="PTHR11766:SF0">
    <property type="entry name" value="TYROSINE--TRNA LIGASE, MITOCHONDRIAL"/>
    <property type="match status" value="1"/>
</dbReference>
<dbReference type="PANTHER" id="PTHR11766">
    <property type="entry name" value="TYROSYL-TRNA SYNTHETASE"/>
    <property type="match status" value="1"/>
</dbReference>
<dbReference type="Pfam" id="PF00579">
    <property type="entry name" value="tRNA-synt_1b"/>
    <property type="match status" value="1"/>
</dbReference>
<dbReference type="PRINTS" id="PR01040">
    <property type="entry name" value="TRNASYNTHTYR"/>
</dbReference>
<dbReference type="SUPFAM" id="SSF55174">
    <property type="entry name" value="Alpha-L RNA-binding motif"/>
    <property type="match status" value="1"/>
</dbReference>
<dbReference type="SUPFAM" id="SSF52374">
    <property type="entry name" value="Nucleotidylyl transferase"/>
    <property type="match status" value="1"/>
</dbReference>
<dbReference type="PROSITE" id="PS00178">
    <property type="entry name" value="AA_TRNA_LIGASE_I"/>
    <property type="match status" value="1"/>
</dbReference>
<dbReference type="PROSITE" id="PS50889">
    <property type="entry name" value="S4"/>
    <property type="match status" value="1"/>
</dbReference>
<proteinExistence type="inferred from homology"/>